<dbReference type="EC" id="5.6.2.-" evidence="5"/>
<dbReference type="EMBL" id="Z47973">
    <property type="protein sequence ID" value="CAA87990.1"/>
    <property type="status" value="ALT_INIT"/>
    <property type="molecule type" value="Genomic_DNA"/>
</dbReference>
<dbReference type="EMBL" id="Z47973">
    <property type="protein sequence ID" value="CAA87991.1"/>
    <property type="status" value="ALT_SEQ"/>
    <property type="molecule type" value="Genomic_DNA"/>
</dbReference>
<dbReference type="EMBL" id="Z73171">
    <property type="protein sequence ID" value="CAA97520.1"/>
    <property type="status" value="ALT_INIT"/>
    <property type="molecule type" value="Genomic_DNA"/>
</dbReference>
<dbReference type="EMBL" id="BK006945">
    <property type="protein sequence ID" value="DAA09260.1"/>
    <property type="status" value="ALT_INIT"/>
    <property type="molecule type" value="Genomic_DNA"/>
</dbReference>
<dbReference type="RefSeq" id="NP_013034.1">
    <property type="nucleotide sequence ID" value="NM_001181886.1"/>
</dbReference>
<dbReference type="SMR" id="Q99208"/>
<dbReference type="BioGRID" id="31251">
    <property type="interactions" value="3"/>
</dbReference>
<dbReference type="FunCoup" id="Q99208">
    <property type="interactions" value="46"/>
</dbReference>
<dbReference type="PeptideAtlas" id="Q99208"/>
<dbReference type="GeneID" id="850660"/>
<dbReference type="KEGG" id="sce:YLL066C"/>
<dbReference type="AGR" id="SGD:S000003989"/>
<dbReference type="SGD" id="S000003989">
    <property type="gene designation" value="YLL066C"/>
</dbReference>
<dbReference type="InParanoid" id="Q99208"/>
<dbReference type="BioCyc" id="YEAST:G3O-32160-MONOMER"/>
<dbReference type="Reactome" id="R-SCE-5689880">
    <property type="pathway name" value="Ub-specific processing proteases"/>
</dbReference>
<dbReference type="PRO" id="PR:Q99208"/>
<dbReference type="Proteomes" id="UP000002311">
    <property type="component" value="Chromosome XII"/>
</dbReference>
<dbReference type="RNAct" id="Q99208">
    <property type="molecule type" value="protein"/>
</dbReference>
<dbReference type="GO" id="GO:0005737">
    <property type="term" value="C:cytoplasm"/>
    <property type="evidence" value="ECO:0000318"/>
    <property type="project" value="GO_Central"/>
</dbReference>
<dbReference type="GO" id="GO:0005524">
    <property type="term" value="F:ATP binding"/>
    <property type="evidence" value="ECO:0007669"/>
    <property type="project" value="UniProtKB-KW"/>
</dbReference>
<dbReference type="GO" id="GO:0016887">
    <property type="term" value="F:ATP hydrolysis activity"/>
    <property type="evidence" value="ECO:0007669"/>
    <property type="project" value="RHEA"/>
</dbReference>
<dbReference type="GO" id="GO:0004386">
    <property type="term" value="F:helicase activity"/>
    <property type="evidence" value="ECO:0000250"/>
    <property type="project" value="SGD"/>
</dbReference>
<dbReference type="GO" id="GO:0003676">
    <property type="term" value="F:nucleic acid binding"/>
    <property type="evidence" value="ECO:0007669"/>
    <property type="project" value="InterPro"/>
</dbReference>
<dbReference type="GO" id="GO:0000722">
    <property type="term" value="P:telomere maintenance via recombination"/>
    <property type="evidence" value="ECO:0007669"/>
    <property type="project" value="UniProtKB-ARBA"/>
</dbReference>
<dbReference type="FunFam" id="3.40.50.300:FF:001914">
    <property type="entry name" value="YML133C-like protein"/>
    <property type="match status" value="1"/>
</dbReference>
<dbReference type="FunFam" id="3.40.50.300:FF:002410">
    <property type="entry name" value="YML133C-like protein"/>
    <property type="match status" value="1"/>
</dbReference>
<dbReference type="Gene3D" id="3.40.50.300">
    <property type="entry name" value="P-loop containing nucleotide triphosphate hydrolases"/>
    <property type="match status" value="1"/>
</dbReference>
<dbReference type="InterPro" id="IPR011545">
    <property type="entry name" value="DEAD/DEAH_box_helicase_dom"/>
</dbReference>
<dbReference type="InterPro" id="IPR014001">
    <property type="entry name" value="Helicase_ATP-bd"/>
</dbReference>
<dbReference type="InterPro" id="IPR001650">
    <property type="entry name" value="Helicase_C-like"/>
</dbReference>
<dbReference type="InterPro" id="IPR027417">
    <property type="entry name" value="P-loop_NTPase"/>
</dbReference>
<dbReference type="InterPro" id="IPR021646">
    <property type="entry name" value="Sir1_ORC-binding"/>
</dbReference>
<dbReference type="InterPro" id="IPR050978">
    <property type="entry name" value="Y'_ATP-dependent_helicase"/>
</dbReference>
<dbReference type="PANTHER" id="PTHR31583">
    <property type="match status" value="1"/>
</dbReference>
<dbReference type="PANTHER" id="PTHR31583:SF2">
    <property type="match status" value="1"/>
</dbReference>
<dbReference type="Pfam" id="PF00270">
    <property type="entry name" value="DEAD"/>
    <property type="match status" value="1"/>
</dbReference>
<dbReference type="Pfam" id="PF00271">
    <property type="entry name" value="Helicase_C"/>
    <property type="match status" value="1"/>
</dbReference>
<dbReference type="Pfam" id="PF11603">
    <property type="entry name" value="Sir1"/>
    <property type="match status" value="1"/>
</dbReference>
<dbReference type="SMART" id="SM00487">
    <property type="entry name" value="DEXDc"/>
    <property type="match status" value="1"/>
</dbReference>
<dbReference type="SMART" id="SM00490">
    <property type="entry name" value="HELICc"/>
    <property type="match status" value="1"/>
</dbReference>
<dbReference type="SUPFAM" id="SSF52540">
    <property type="entry name" value="P-loop containing nucleoside triphosphate hydrolases"/>
    <property type="match status" value="1"/>
</dbReference>
<dbReference type="PROSITE" id="PS51192">
    <property type="entry name" value="HELICASE_ATP_BIND_1"/>
    <property type="match status" value="1"/>
</dbReference>
<dbReference type="PROSITE" id="PS51194">
    <property type="entry name" value="HELICASE_CTER"/>
    <property type="match status" value="1"/>
</dbReference>
<name>YL066_YEAST</name>
<keyword id="KW-0067">ATP-binding</keyword>
<keyword id="KW-0347">Helicase</keyword>
<keyword id="KW-0378">Hydrolase</keyword>
<keyword id="KW-0413">Isomerase</keyword>
<keyword id="KW-0547">Nucleotide-binding</keyword>
<keyword id="KW-1185">Reference proteome</keyword>
<sequence>MKVSDRRKFEKANFDEFESALNNKNDLVHCPSITLFESIPTEVRSFYEDEKSGLIKVVKFRTGAMDRKRSFEKIVVSVMVGKNVQKFLTFVEDEPDFQGGPIPSKYLIPKKINLMVYTLFQVHTLKFNRKDYDTLSLFYLNRGYYNELSFRVLERCHEIASARPNDSSTMRTFTDFVSGAPIVRSLQKSTIRRYGYNLAPHMFLLLHVDELSIFSAYQASLPGEKKVDTERLKRDLCPRKPIEIKYFSQICNDMMNKKDRLGDVLATAQRIRRRYNKNGSSEPRLKTLDGLTSERWIQWLGLESDYHCSFSSTRNAEDVVAGEAASSDHDQKISRVTRKRPREPKSTNDILVAGQKLFGSSFEFRDLHQLRLCHEIYMADTPSVAVQAPPGYGKTELFHLPLIALASKGDVKYVSFLFVPYTVLLANCMIRLGRCGCLNVAPVRNFIEEGCDGVTDLYVGIYDDLASTNFTDRIAAWENIVECTFRTNNVKLGYLIVDEFHNFETEVYRQSQFGGITNLDFDAFEKAIFLSGTAPEAVADAALQRIGLTGLAKKSMDINELKRSEDLSRGLSSYPTRMFNLIKEKSEVPLGHVHKIWKKVESQPEEALKLLLALFEIEPESKAIVVASTTNEVEELACSWRKYFRVVWIHGKLGAAEKVSRTKEFVTDGSMRVLIGTKLVTEGIDIKQLMMVIMLDNRLNIIELIQGVGRLRDGGLCYLLSRKNSWAARNRKGELPPIKEGCITEQVREFYGLESKKGKKGQHVGCCGSRTDLSADTVELIERMDRLAEKQATASMSIVALPSSFQESNSSDRCRKYCSSDEDSNTCIHGSANASTNATTNSSTNATTTASTNVRTSATTTASINVRTSATTTESTNSSTNATTTASTNVRTSATTTASINVRTSATTTESTNSNTSATTTESTDSNTSATTTESTDSNTSATTTASTNSSTNATTTASTNSSTNATTTESTNASAKEDANKDGNAEDNRFHPVTDINKESYKRKGSQMVLLERKKLKAQFPNTSENMNVLQFLGFRSDEIKHLFLYGIDIYFCPEGVFTQYGLCKGCQKMFGLCVCWAGQKVSYRRMAWEALAVERMLRNDEEYKEYLEDIEPYHGDPVGYLKFFSVKRGEIYSQIQRNYAWYLAITRRRETISVLDSTRGKQGSQVFRMSGRQIKELYYKVWSNLRESKTEVLQYFLNWDEKKCREEWEAKDDTVFVEALEKVGVFQRLRSMTSAGLQGPQYVKLQFSRHHRQLRSRYELSLGMHLRDQLALGVTPSKVPHWTAFLSMLIGLFYNKTFRQKLEYLLEQISEVWLLPHWVDLANVEVLAADNTRVPLYMLMVAVHKELDSDDVPDGRFDIILLCRDSSREVGE</sequence>
<comment type="function">
    <text evidence="5">Catalyzes DNA unwinding and is involved in telomerase-independent telomere maintenance.</text>
</comment>
<comment type="induction">
    <text evidence="5">Induced in absence of telomerase TLC1.</text>
</comment>
<comment type="similarity">
    <text evidence="4">Belongs to the helicase family. Yeast subtelomeric Y' repeat subfamily.</text>
</comment>
<comment type="sequence caution" evidence="4">
    <conflict type="erroneous initiation">
        <sequence resource="EMBL-CDS" id="CAA87990"/>
    </conflict>
    <text>Truncated N-terminus.</text>
</comment>
<comment type="sequence caution" evidence="4">
    <conflict type="erroneous gene model prediction">
        <sequence resource="EMBL-CDS" id="CAA87991"/>
    </conflict>
</comment>
<comment type="sequence caution" evidence="4">
    <conflict type="erroneous initiation">
        <sequence resource="EMBL-CDS" id="CAA97520"/>
    </conflict>
    <text>Truncated N-terminus.</text>
</comment>
<comment type="sequence caution" evidence="4">
    <conflict type="erroneous initiation">
        <sequence resource="EMBL-CDS" id="DAA09260"/>
    </conflict>
    <text>Truncated N-terminus.</text>
</comment>
<reference key="1">
    <citation type="submission" date="1995-01" db="EMBL/GenBank/DDBJ databases">
        <title>Sequence of a 37 kb DNA fragment from chromosome XII of Saccharomyces cerevisiae including the subtelomeric region of the left arm.</title>
        <authorList>
            <person name="Wedler H."/>
            <person name="Wambutt R."/>
        </authorList>
    </citation>
    <scope>NUCLEOTIDE SEQUENCE [GENOMIC DNA]</scope>
    <source>
        <strain>ATCC 204511 / S288c / AB972</strain>
    </source>
</reference>
<reference key="2">
    <citation type="journal article" date="1997" name="Nature">
        <title>The nucleotide sequence of Saccharomyces cerevisiae chromosome XII.</title>
        <authorList>
            <person name="Johnston M."/>
            <person name="Hillier L.W."/>
            <person name="Riles L."/>
            <person name="Albermann K."/>
            <person name="Andre B."/>
            <person name="Ansorge W."/>
            <person name="Benes V."/>
            <person name="Brueckner M."/>
            <person name="Delius H."/>
            <person name="Dubois E."/>
            <person name="Duesterhoeft A."/>
            <person name="Entian K.-D."/>
            <person name="Floeth M."/>
            <person name="Goffeau A."/>
            <person name="Hebling U."/>
            <person name="Heumann K."/>
            <person name="Heuss-Neitzel D."/>
            <person name="Hilbert H."/>
            <person name="Hilger F."/>
            <person name="Kleine K."/>
            <person name="Koetter P."/>
            <person name="Louis E.J."/>
            <person name="Messenguy F."/>
            <person name="Mewes H.-W."/>
            <person name="Miosga T."/>
            <person name="Moestl D."/>
            <person name="Mueller-Auer S."/>
            <person name="Nentwich U."/>
            <person name="Obermaier B."/>
            <person name="Piravandi E."/>
            <person name="Pohl T.M."/>
            <person name="Portetelle D."/>
            <person name="Purnelle B."/>
            <person name="Rechmann S."/>
            <person name="Rieger M."/>
            <person name="Rinke M."/>
            <person name="Rose M."/>
            <person name="Scharfe M."/>
            <person name="Scherens B."/>
            <person name="Scholler P."/>
            <person name="Schwager C."/>
            <person name="Schwarz S."/>
            <person name="Underwood A.P."/>
            <person name="Urrestarazu L.A."/>
            <person name="Vandenbol M."/>
            <person name="Verhasselt P."/>
            <person name="Vierendeels F."/>
            <person name="Voet M."/>
            <person name="Volckaert G."/>
            <person name="Voss H."/>
            <person name="Wambutt R."/>
            <person name="Wedler E."/>
            <person name="Wedler H."/>
            <person name="Zimmermann F.K."/>
            <person name="Zollner A."/>
            <person name="Hani J."/>
            <person name="Hoheisel J.D."/>
        </authorList>
    </citation>
    <scope>NUCLEOTIDE SEQUENCE [LARGE SCALE GENOMIC DNA]</scope>
    <source>
        <strain>ATCC 204508 / S288c</strain>
    </source>
</reference>
<reference key="3">
    <citation type="journal article" date="2014" name="G3 (Bethesda)">
        <title>The reference genome sequence of Saccharomyces cerevisiae: Then and now.</title>
        <authorList>
            <person name="Engel S.R."/>
            <person name="Dietrich F.S."/>
            <person name="Fisk D.G."/>
            <person name="Binkley G."/>
            <person name="Balakrishnan R."/>
            <person name="Costanzo M.C."/>
            <person name="Dwight S.S."/>
            <person name="Hitz B.C."/>
            <person name="Karra K."/>
            <person name="Nash R.S."/>
            <person name="Weng S."/>
            <person name="Wong E.D."/>
            <person name="Lloyd P."/>
            <person name="Skrzypek M.S."/>
            <person name="Miyasato S.R."/>
            <person name="Simison M."/>
            <person name="Cherry J.M."/>
        </authorList>
    </citation>
    <scope>GENOME REANNOTATION</scope>
    <source>
        <strain>ATCC 204508 / S288c</strain>
    </source>
</reference>
<reference key="4">
    <citation type="journal article" date="1998" name="J. Biol. Chem.">
        <title>Y'-Help1, a DNA helicase encoded by the yeast subtelomeric Y' element, is induced in survivors defective for telomerase.</title>
        <authorList>
            <person name="Yamada M."/>
            <person name="Hayatsu N."/>
            <person name="Matsuura A."/>
            <person name="Ishikawa F."/>
        </authorList>
    </citation>
    <scope>FUNCTION</scope>
    <scope>INDUCTION</scope>
</reference>
<organism>
    <name type="scientific">Saccharomyces cerevisiae (strain ATCC 204508 / S288c)</name>
    <name type="common">Baker's yeast</name>
    <dbReference type="NCBI Taxonomy" id="559292"/>
    <lineage>
        <taxon>Eukaryota</taxon>
        <taxon>Fungi</taxon>
        <taxon>Dikarya</taxon>
        <taxon>Ascomycota</taxon>
        <taxon>Saccharomycotina</taxon>
        <taxon>Saccharomycetes</taxon>
        <taxon>Saccharomycetales</taxon>
        <taxon>Saccharomycetaceae</taxon>
        <taxon>Saccharomyces</taxon>
    </lineage>
</organism>
<gene>
    <name type="ordered locus">YLL066C</name>
    <name type="ORF">L0519</name>
    <name type="ORF">L0532</name>
</gene>
<feature type="chain" id="PRO_0000268167" description="Y' element ATP-dependent helicase YLL066C">
    <location>
        <begin position="1"/>
        <end position="1374"/>
    </location>
</feature>
<feature type="domain" description="Helicase ATP-binding" evidence="1">
    <location>
        <begin position="375"/>
        <end position="552"/>
    </location>
</feature>
<feature type="domain" description="Helicase C-terminal" evidence="2">
    <location>
        <begin position="609"/>
        <end position="758"/>
    </location>
</feature>
<feature type="region of interest" description="Disordered" evidence="3">
    <location>
        <begin position="321"/>
        <end position="345"/>
    </location>
</feature>
<feature type="region of interest" description="Disordered" evidence="3">
    <location>
        <begin position="832"/>
        <end position="999"/>
    </location>
</feature>
<feature type="short sequence motif" description="DEAH box">
    <location>
        <begin position="498"/>
        <end position="501"/>
    </location>
</feature>
<feature type="compositionally biased region" description="Low complexity" evidence="3">
    <location>
        <begin position="832"/>
        <end position="975"/>
    </location>
</feature>
<feature type="compositionally biased region" description="Basic and acidic residues" evidence="3">
    <location>
        <begin position="976"/>
        <end position="999"/>
    </location>
</feature>
<feature type="binding site" evidence="1">
    <location>
        <begin position="388"/>
        <end position="395"/>
    </location>
    <ligand>
        <name>ATP</name>
        <dbReference type="ChEBI" id="CHEBI:30616"/>
    </ligand>
</feature>
<protein>
    <recommendedName>
        <fullName>Y' element ATP-dependent helicase YLL066C</fullName>
        <ecNumber evidence="5">5.6.2.-</ecNumber>
    </recommendedName>
</protein>
<evidence type="ECO:0000255" key="1">
    <source>
        <dbReference type="PROSITE-ProRule" id="PRU00541"/>
    </source>
</evidence>
<evidence type="ECO:0000255" key="2">
    <source>
        <dbReference type="PROSITE-ProRule" id="PRU00542"/>
    </source>
</evidence>
<evidence type="ECO:0000256" key="3">
    <source>
        <dbReference type="SAM" id="MobiDB-lite"/>
    </source>
</evidence>
<evidence type="ECO:0000305" key="4"/>
<evidence type="ECO:0000305" key="5">
    <source>
    </source>
</evidence>
<accession>Q99208</accession>
<accession>D6VXU4</accession>
<accession>Q12054</accession>
<proteinExistence type="evidence at transcript level"/>